<evidence type="ECO:0000255" key="1">
    <source>
        <dbReference type="HAMAP-Rule" id="MF_00004"/>
    </source>
</evidence>
<comment type="function">
    <text evidence="1">Catalyzes a salvage reaction resulting in the formation of AMP, that is energically less costly than de novo synthesis.</text>
</comment>
<comment type="catalytic activity">
    <reaction evidence="1">
        <text>AMP + diphosphate = 5-phospho-alpha-D-ribose 1-diphosphate + adenine</text>
        <dbReference type="Rhea" id="RHEA:16609"/>
        <dbReference type="ChEBI" id="CHEBI:16708"/>
        <dbReference type="ChEBI" id="CHEBI:33019"/>
        <dbReference type="ChEBI" id="CHEBI:58017"/>
        <dbReference type="ChEBI" id="CHEBI:456215"/>
        <dbReference type="EC" id="2.4.2.7"/>
    </reaction>
</comment>
<comment type="pathway">
    <text evidence="1">Purine metabolism; AMP biosynthesis via salvage pathway; AMP from adenine: step 1/1.</text>
</comment>
<comment type="subunit">
    <text evidence="1">Homodimer.</text>
</comment>
<comment type="subcellular location">
    <subcellularLocation>
        <location evidence="1">Cytoplasm</location>
    </subcellularLocation>
</comment>
<comment type="similarity">
    <text evidence="1">Belongs to the purine/pyrimidine phosphoribosyltransferase family.</text>
</comment>
<reference key="1">
    <citation type="journal article" date="2011" name="J. Bacteriol.">
        <title>Comparative genomics of 28 Salmonella enterica isolates: evidence for CRISPR-mediated adaptive sublineage evolution.</title>
        <authorList>
            <person name="Fricke W.F."/>
            <person name="Mammel M.K."/>
            <person name="McDermott P.F."/>
            <person name="Tartera C."/>
            <person name="White D.G."/>
            <person name="Leclerc J.E."/>
            <person name="Ravel J."/>
            <person name="Cebula T.A."/>
        </authorList>
    </citation>
    <scope>NUCLEOTIDE SEQUENCE [LARGE SCALE GENOMIC DNA]</scope>
    <source>
        <strain>SL476</strain>
    </source>
</reference>
<dbReference type="EC" id="2.4.2.7" evidence="1"/>
<dbReference type="EMBL" id="CP001120">
    <property type="protein sequence ID" value="ACF68071.1"/>
    <property type="molecule type" value="Genomic_DNA"/>
</dbReference>
<dbReference type="RefSeq" id="WP_000127346.1">
    <property type="nucleotide sequence ID" value="NC_011083.1"/>
</dbReference>
<dbReference type="SMR" id="B4T9H6"/>
<dbReference type="KEGG" id="seh:SeHA_C0587"/>
<dbReference type="HOGENOM" id="CLU_063339_3_0_6"/>
<dbReference type="UniPathway" id="UPA00588">
    <property type="reaction ID" value="UER00646"/>
</dbReference>
<dbReference type="Proteomes" id="UP000001866">
    <property type="component" value="Chromosome"/>
</dbReference>
<dbReference type="GO" id="GO:0005829">
    <property type="term" value="C:cytosol"/>
    <property type="evidence" value="ECO:0007669"/>
    <property type="project" value="TreeGrafter"/>
</dbReference>
<dbReference type="GO" id="GO:0003999">
    <property type="term" value="F:adenine phosphoribosyltransferase activity"/>
    <property type="evidence" value="ECO:0007669"/>
    <property type="project" value="UniProtKB-UniRule"/>
</dbReference>
<dbReference type="GO" id="GO:0006168">
    <property type="term" value="P:adenine salvage"/>
    <property type="evidence" value="ECO:0007669"/>
    <property type="project" value="InterPro"/>
</dbReference>
<dbReference type="GO" id="GO:0044209">
    <property type="term" value="P:AMP salvage"/>
    <property type="evidence" value="ECO:0007669"/>
    <property type="project" value="UniProtKB-UniRule"/>
</dbReference>
<dbReference type="GO" id="GO:0006166">
    <property type="term" value="P:purine ribonucleoside salvage"/>
    <property type="evidence" value="ECO:0007669"/>
    <property type="project" value="UniProtKB-KW"/>
</dbReference>
<dbReference type="CDD" id="cd06223">
    <property type="entry name" value="PRTases_typeI"/>
    <property type="match status" value="1"/>
</dbReference>
<dbReference type="FunFam" id="3.40.50.2020:FF:000004">
    <property type="entry name" value="Adenine phosphoribosyltransferase"/>
    <property type="match status" value="1"/>
</dbReference>
<dbReference type="Gene3D" id="3.40.50.2020">
    <property type="match status" value="1"/>
</dbReference>
<dbReference type="HAMAP" id="MF_00004">
    <property type="entry name" value="Aden_phosphoribosyltr"/>
    <property type="match status" value="1"/>
</dbReference>
<dbReference type="InterPro" id="IPR005764">
    <property type="entry name" value="Ade_phspho_trans"/>
</dbReference>
<dbReference type="InterPro" id="IPR050120">
    <property type="entry name" value="Adenine_PRTase"/>
</dbReference>
<dbReference type="InterPro" id="IPR000836">
    <property type="entry name" value="PRibTrfase_dom"/>
</dbReference>
<dbReference type="InterPro" id="IPR029057">
    <property type="entry name" value="PRTase-like"/>
</dbReference>
<dbReference type="NCBIfam" id="TIGR01090">
    <property type="entry name" value="apt"/>
    <property type="match status" value="1"/>
</dbReference>
<dbReference type="NCBIfam" id="NF002632">
    <property type="entry name" value="PRK02304.1-1"/>
    <property type="match status" value="1"/>
</dbReference>
<dbReference type="NCBIfam" id="NF002634">
    <property type="entry name" value="PRK02304.1-3"/>
    <property type="match status" value="1"/>
</dbReference>
<dbReference type="NCBIfam" id="NF002636">
    <property type="entry name" value="PRK02304.1-5"/>
    <property type="match status" value="1"/>
</dbReference>
<dbReference type="PANTHER" id="PTHR11776">
    <property type="entry name" value="ADENINE PHOSPHORIBOSYLTRANSFERASE"/>
    <property type="match status" value="1"/>
</dbReference>
<dbReference type="PANTHER" id="PTHR11776:SF7">
    <property type="entry name" value="PHOSPHORIBOSYLTRANSFERASE DOMAIN-CONTAINING PROTEIN"/>
    <property type="match status" value="1"/>
</dbReference>
<dbReference type="Pfam" id="PF00156">
    <property type="entry name" value="Pribosyltran"/>
    <property type="match status" value="1"/>
</dbReference>
<dbReference type="SUPFAM" id="SSF53271">
    <property type="entry name" value="PRTase-like"/>
    <property type="match status" value="1"/>
</dbReference>
<dbReference type="PROSITE" id="PS00103">
    <property type="entry name" value="PUR_PYR_PR_TRANSFER"/>
    <property type="match status" value="1"/>
</dbReference>
<organism>
    <name type="scientific">Salmonella heidelberg (strain SL476)</name>
    <dbReference type="NCBI Taxonomy" id="454169"/>
    <lineage>
        <taxon>Bacteria</taxon>
        <taxon>Pseudomonadati</taxon>
        <taxon>Pseudomonadota</taxon>
        <taxon>Gammaproteobacteria</taxon>
        <taxon>Enterobacterales</taxon>
        <taxon>Enterobacteriaceae</taxon>
        <taxon>Salmonella</taxon>
    </lineage>
</organism>
<protein>
    <recommendedName>
        <fullName evidence="1">Adenine phosphoribosyltransferase</fullName>
        <shortName evidence="1">APRT</shortName>
        <ecNumber evidence="1">2.4.2.7</ecNumber>
    </recommendedName>
</protein>
<gene>
    <name evidence="1" type="primary">apt</name>
    <name type="ordered locus">SeHA_C0587</name>
</gene>
<accession>B4T9H6</accession>
<name>APT_SALHS</name>
<sequence length="183" mass="19927">MTATAQQLEFLKNSIKSIQDYPKPGILFRDVTSLLEDPKAYALSIELLVERYKNAGITKVVGTEARGFLFGAPVALGLGVGFVPVRKPRKLPRETIAETYALEYGTDQLEIHVDAIKPGDNVLVVDDLLATGGTIEATVKLIRRLGGKVTDAAFIINLFDLGGEQRLEKQGITCYSLVPFPGH</sequence>
<proteinExistence type="inferred from homology"/>
<feature type="chain" id="PRO_1000089002" description="Adenine phosphoribosyltransferase">
    <location>
        <begin position="1"/>
        <end position="183"/>
    </location>
</feature>
<keyword id="KW-0963">Cytoplasm</keyword>
<keyword id="KW-0328">Glycosyltransferase</keyword>
<keyword id="KW-0660">Purine salvage</keyword>
<keyword id="KW-0808">Transferase</keyword>